<protein>
    <recommendedName>
        <fullName evidence="2">Methyltransferase cpsF</fullName>
        <ecNumber evidence="1">2.1.1.-</ecNumber>
    </recommendedName>
    <alternativeName>
        <fullName evidence="2">Campesines biosynthesis cluster protein F</fullName>
    </alternativeName>
</protein>
<keyword id="KW-0017">Alkaloid metabolism</keyword>
<keyword id="KW-0489">Methyltransferase</keyword>
<keyword id="KW-0949">S-adenosyl-L-methionine</keyword>
<keyword id="KW-0808">Transferase</keyword>
<dbReference type="EC" id="2.1.1.-" evidence="1"/>
<dbReference type="EMBL" id="MSFM01000014">
    <property type="protein sequence ID" value="PKY00573.1"/>
    <property type="molecule type" value="Genomic_DNA"/>
</dbReference>
<dbReference type="SMR" id="A0A2I1CSH5"/>
<dbReference type="VEuPathDB" id="FungiDB:P168DRAFT_322182"/>
<dbReference type="OrthoDB" id="2013972at2759"/>
<dbReference type="Proteomes" id="UP000234254">
    <property type="component" value="Unassembled WGS sequence"/>
</dbReference>
<dbReference type="GO" id="GO:0008168">
    <property type="term" value="F:methyltransferase activity"/>
    <property type="evidence" value="ECO:0007669"/>
    <property type="project" value="UniProtKB-KW"/>
</dbReference>
<dbReference type="GO" id="GO:0009820">
    <property type="term" value="P:alkaloid metabolic process"/>
    <property type="evidence" value="ECO:0007669"/>
    <property type="project" value="UniProtKB-KW"/>
</dbReference>
<dbReference type="GO" id="GO:0032259">
    <property type="term" value="P:methylation"/>
    <property type="evidence" value="ECO:0007669"/>
    <property type="project" value="UniProtKB-KW"/>
</dbReference>
<dbReference type="CDD" id="cd02440">
    <property type="entry name" value="AdoMet_MTases"/>
    <property type="match status" value="1"/>
</dbReference>
<dbReference type="Gene3D" id="3.40.50.150">
    <property type="entry name" value="Vaccinia Virus protein VP39"/>
    <property type="match status" value="1"/>
</dbReference>
<dbReference type="InterPro" id="IPR029063">
    <property type="entry name" value="SAM-dependent_MTases_sf"/>
</dbReference>
<dbReference type="PANTHER" id="PTHR43591:SF24">
    <property type="entry name" value="2-METHOXY-6-POLYPRENYL-1,4-BENZOQUINOL METHYLASE, MITOCHONDRIAL"/>
    <property type="match status" value="1"/>
</dbReference>
<dbReference type="PANTHER" id="PTHR43591">
    <property type="entry name" value="METHYLTRANSFERASE"/>
    <property type="match status" value="1"/>
</dbReference>
<dbReference type="Pfam" id="PF13489">
    <property type="entry name" value="Methyltransf_23"/>
    <property type="match status" value="1"/>
</dbReference>
<dbReference type="SUPFAM" id="SSF53335">
    <property type="entry name" value="S-adenosyl-L-methionine-dependent methyltransferases"/>
    <property type="match status" value="1"/>
</dbReference>
<proteinExistence type="evidence at protein level"/>
<sequence>MDKALISHQEGDQLYDELCHAFFVRSNNGKLHLAPVERPKCVLDLGCGAGVWATEFGERLSDREILWTWALKTGNCSQGVSFMSGPDVPNCQFIAADIQNEWTWLAQHKVDFIHIRGLVGFIHSWPDLLRRVHASLAPGGWLEIADLGPHTLSDDGSLSQAQGLLQFDKLSDKMLGTMGQQVGLVTRLGDMMETAGFQDVSESTRKTPLSDWSDDVEMRQMASTSAALHEMDFRMIASRGLQPVLNLSSEKVEHVLSDALHDMHNKRIHAYKLRYTFTGCKRD</sequence>
<accession>A0A2I1CSH5</accession>
<gene>
    <name evidence="2" type="primary">cpsF</name>
    <name type="ORF">P168DRAFT_322182</name>
</gene>
<reference key="1">
    <citation type="submission" date="2016-12" db="EMBL/GenBank/DDBJ databases">
        <title>The genomes of Aspergillus section Nigri reveals drivers in fungal speciation.</title>
        <authorList>
            <consortium name="DOE Joint Genome Institute"/>
            <person name="Vesth T.C."/>
            <person name="Nybo J."/>
            <person name="Theobald S."/>
            <person name="Brandl J."/>
            <person name="Frisvad J.C."/>
            <person name="Nielsen K.F."/>
            <person name="Lyhne E.K."/>
            <person name="Kogle M.E."/>
            <person name="Kuo A."/>
            <person name="Riley R."/>
            <person name="Clum A."/>
            <person name="Nolan M."/>
            <person name="Lipzen A."/>
            <person name="Salamov A."/>
            <person name="Henrissat B."/>
            <person name="Wiebenga A."/>
            <person name="De Vries R.P."/>
            <person name="Grigoriev I.V."/>
            <person name="Mortensen U.H."/>
            <person name="Andersen M.R."/>
            <person name="Baker S.E."/>
        </authorList>
    </citation>
    <scope>NUCLEOTIDE SEQUENCE [LARGE SCALE GENOMIC DNA]</scope>
    <source>
        <strain>IBT 28561</strain>
    </source>
</reference>
<reference key="2">
    <citation type="journal article" date="2024" name="Angew. Chem. Int. Ed.">
        <title>A Cytochrome P450 Catalyzes Oxidative Coupling Formation of Insecticidal Dimeric Indole Piperazine Alkaloids.</title>
        <authorList>
            <person name="He Q."/>
            <person name="Zhang H.R."/>
            <person name="Zou Y."/>
        </authorList>
    </citation>
    <scope>FUNCTION</scope>
    <scope>CATALYTIC ACTIVITY</scope>
    <scope>BIOTECHNOLOGY</scope>
    <scope>PATHWAY</scope>
</reference>
<feature type="chain" id="PRO_0000461454" description="Methyltransferase cpsF">
    <location>
        <begin position="1"/>
        <end position="283"/>
    </location>
</feature>
<name>CPSF_ASPC2</name>
<organism>
    <name type="scientific">Aspergillus campestris (strain IBT 28561)</name>
    <dbReference type="NCBI Taxonomy" id="1392248"/>
    <lineage>
        <taxon>Eukaryota</taxon>
        <taxon>Fungi</taxon>
        <taxon>Dikarya</taxon>
        <taxon>Ascomycota</taxon>
        <taxon>Pezizomycotina</taxon>
        <taxon>Eurotiomycetes</taxon>
        <taxon>Eurotiomycetidae</taxon>
        <taxon>Eurotiales</taxon>
        <taxon>Aspergillaceae</taxon>
        <taxon>Aspergillus</taxon>
        <taxon>Aspergillus subgen. Circumdati</taxon>
    </lineage>
</organism>
<comment type="function">
    <text evidence="1">Methyltransferase; part of the gene cluster that mediates the biosynthesis of campesine G, a dimeric indole piperazine alkaloid that shows good insecticidal activity Galleria mellonella (PubMed:38527935). Within the pathway, cpsF methylates campesine A at N13 of piperazine ring to produce campesine B (PubMed:38527935). The non-canonical non-ribosomal peptide synthetase cpsA catalyzes the first steps of the pathway by producing L-tryptophanal and L-valinal from their respective amino-acids. These products condensate spontaneously to form trypyl-valyl pyrazine also known as didehydrocampesine A. The NmrA-like family domain-containing oxidoreductase cpsB is the next enzyme in cps pathway and reduces the unstable didehydrocampesine A to campesine A. The methyltransferase cpsF and the acetyltransferase cpsE both recognize N13 of piperazine ring to carry out methylation and acetylation of campesine A to produce campesine C and B, respectively. The cytochrome P450 monooxygenase cpsD then acts as a dimerase that catalyzes oxidative heterocoupling between campesine B and C to produce heterodimers with unexpected 6/5/6/6/6/6/5/6 eight-ring scaffold called campesine D. Finally,the cytochrome P450 monooxygenase cpsC is a regioselective dehydrogenase that catalyzes dehydrogenation reaction towards C2-N1 to produce campesine G (PubMed:38527935).</text>
</comment>
<comment type="catalytic activity">
    <reaction evidence="1">
        <text>campesine A + S-adenosyl-L-methionine = campesine B + S-adenosyl-L-homocysteine + H(+)</text>
        <dbReference type="Rhea" id="RHEA:82823"/>
        <dbReference type="ChEBI" id="CHEBI:15378"/>
        <dbReference type="ChEBI" id="CHEBI:57856"/>
        <dbReference type="ChEBI" id="CHEBI:59789"/>
        <dbReference type="ChEBI" id="CHEBI:232509"/>
        <dbReference type="ChEBI" id="CHEBI:232510"/>
    </reaction>
    <physiologicalReaction direction="left-to-right" evidence="1">
        <dbReference type="Rhea" id="RHEA:82824"/>
    </physiologicalReaction>
</comment>
<comment type="pathway">
    <text evidence="1">Alkaloid biosynthesis.</text>
</comment>
<comment type="biotechnology">
    <text evidence="1">Campesine G features good insecticidal activity against the global honeybee pest Galleria mellonella, which supports its future application in the development of biopesticides.</text>
</comment>
<comment type="similarity">
    <text evidence="3">Belongs to the methyltransferase superfamily. LaeA methyltransferase family.</text>
</comment>
<evidence type="ECO:0000269" key="1">
    <source>
    </source>
</evidence>
<evidence type="ECO:0000303" key="2">
    <source>
    </source>
</evidence>
<evidence type="ECO:0000305" key="3"/>